<geneLocation type="chloroplast"/>
<reference key="1">
    <citation type="journal article" date="2006" name="BMC Evol. Biol.">
        <title>Phylogenetic analyses of Vitis (Vitaceae) based on complete chloroplast genome sequences: effects of taxon sampling and phylogenetic methods on resolving relationships among rosids.</title>
        <authorList>
            <person name="Jansen R.K."/>
            <person name="Kaittanis C."/>
            <person name="Lee S.-B."/>
            <person name="Saski C."/>
            <person name="Tomkins J."/>
            <person name="Alverson A.J."/>
            <person name="Daniell H."/>
        </authorList>
    </citation>
    <scope>NUCLEOTIDE SEQUENCE [LARGE SCALE GENOMIC DNA]</scope>
    <source>
        <strain>cv. Maxxa</strain>
    </source>
</reference>
<organism>
    <name type="scientific">Vitis vinifera</name>
    <name type="common">Grape</name>
    <dbReference type="NCBI Taxonomy" id="29760"/>
    <lineage>
        <taxon>Eukaryota</taxon>
        <taxon>Viridiplantae</taxon>
        <taxon>Streptophyta</taxon>
        <taxon>Embryophyta</taxon>
        <taxon>Tracheophyta</taxon>
        <taxon>Spermatophyta</taxon>
        <taxon>Magnoliopsida</taxon>
        <taxon>eudicotyledons</taxon>
        <taxon>Gunneridae</taxon>
        <taxon>Pentapetalae</taxon>
        <taxon>rosids</taxon>
        <taxon>Vitales</taxon>
        <taxon>Vitaceae</taxon>
        <taxon>Viteae</taxon>
        <taxon>Vitis</taxon>
    </lineage>
</organism>
<keyword id="KW-0150">Chloroplast</keyword>
<keyword id="KW-0472">Membrane</keyword>
<keyword id="KW-0602">Photosynthesis</keyword>
<keyword id="KW-0934">Plastid</keyword>
<keyword id="KW-1185">Reference proteome</keyword>
<keyword id="KW-0677">Repeat</keyword>
<keyword id="KW-0793">Thylakoid</keyword>
<keyword id="KW-0802">TPR repeat</keyword>
<name>YCF3_VITVI</name>
<feature type="chain" id="PRO_0000275642" description="Photosystem I assembly protein Ycf3">
    <location>
        <begin position="1"/>
        <end position="168"/>
    </location>
</feature>
<feature type="repeat" description="TPR 1">
    <location>
        <begin position="35"/>
        <end position="68"/>
    </location>
</feature>
<feature type="repeat" description="TPR 2">
    <location>
        <begin position="72"/>
        <end position="105"/>
    </location>
</feature>
<feature type="repeat" description="TPR 3">
    <location>
        <begin position="120"/>
        <end position="153"/>
    </location>
</feature>
<dbReference type="EMBL" id="DQ424856">
    <property type="protein sequence ID" value="ABE47535.1"/>
    <property type="molecule type" value="Genomic_DNA"/>
</dbReference>
<dbReference type="RefSeq" id="YP_567077.1">
    <property type="nucleotide sequence ID" value="NC_007957.1"/>
</dbReference>
<dbReference type="SMR" id="Q0ZJ19"/>
<dbReference type="FunCoup" id="Q0ZJ19">
    <property type="interactions" value="24"/>
</dbReference>
<dbReference type="STRING" id="29760.Q0ZJ19"/>
<dbReference type="GeneID" id="4025092"/>
<dbReference type="KEGG" id="vvi:4025092"/>
<dbReference type="eggNOG" id="KOG1124">
    <property type="taxonomic scope" value="Eukaryota"/>
</dbReference>
<dbReference type="InParanoid" id="Q0ZJ19"/>
<dbReference type="OrthoDB" id="878278at71240"/>
<dbReference type="Proteomes" id="UP000009183">
    <property type="component" value="Chloroplast"/>
</dbReference>
<dbReference type="ExpressionAtlas" id="Q0ZJ19">
    <property type="expression patterns" value="baseline and differential"/>
</dbReference>
<dbReference type="GO" id="GO:0009535">
    <property type="term" value="C:chloroplast thylakoid membrane"/>
    <property type="evidence" value="ECO:0007669"/>
    <property type="project" value="UniProtKB-SubCell"/>
</dbReference>
<dbReference type="GO" id="GO:0048564">
    <property type="term" value="P:photosystem I assembly"/>
    <property type="evidence" value="ECO:0000318"/>
    <property type="project" value="GO_Central"/>
</dbReference>
<dbReference type="FunFam" id="1.25.40.10:FF:000004">
    <property type="entry name" value="Photosystem I assembly protein Ycf3"/>
    <property type="match status" value="1"/>
</dbReference>
<dbReference type="Gene3D" id="1.25.40.10">
    <property type="entry name" value="Tetratricopeptide repeat domain"/>
    <property type="match status" value="1"/>
</dbReference>
<dbReference type="HAMAP" id="MF_00439">
    <property type="entry name" value="Ycf3"/>
    <property type="match status" value="1"/>
</dbReference>
<dbReference type="InterPro" id="IPR022818">
    <property type="entry name" value="PSI_Ycf3_assembly"/>
</dbReference>
<dbReference type="InterPro" id="IPR011990">
    <property type="entry name" value="TPR-like_helical_dom_sf"/>
</dbReference>
<dbReference type="InterPro" id="IPR019734">
    <property type="entry name" value="TPR_rpt"/>
</dbReference>
<dbReference type="InterPro" id="IPR051685">
    <property type="entry name" value="Ycf3/AcsC/BcsC/TPR_MFPF"/>
</dbReference>
<dbReference type="NCBIfam" id="NF002725">
    <property type="entry name" value="PRK02603.1"/>
    <property type="match status" value="1"/>
</dbReference>
<dbReference type="PANTHER" id="PTHR44943">
    <property type="entry name" value="CELLULOSE SYNTHASE OPERON PROTEIN C"/>
    <property type="match status" value="1"/>
</dbReference>
<dbReference type="PANTHER" id="PTHR44943:SF8">
    <property type="entry name" value="TPR REPEAT-CONTAINING PROTEIN MJ0263"/>
    <property type="match status" value="1"/>
</dbReference>
<dbReference type="Pfam" id="PF00515">
    <property type="entry name" value="TPR_1"/>
    <property type="match status" value="1"/>
</dbReference>
<dbReference type="SMART" id="SM00028">
    <property type="entry name" value="TPR"/>
    <property type="match status" value="3"/>
</dbReference>
<dbReference type="SUPFAM" id="SSF48452">
    <property type="entry name" value="TPR-like"/>
    <property type="match status" value="1"/>
</dbReference>
<dbReference type="PROSITE" id="PS50005">
    <property type="entry name" value="TPR"/>
    <property type="match status" value="3"/>
</dbReference>
<dbReference type="PROSITE" id="PS50293">
    <property type="entry name" value="TPR_REGION"/>
    <property type="match status" value="2"/>
</dbReference>
<accession>Q0ZJ19</accession>
<gene>
    <name evidence="1" type="primary">ycf3</name>
</gene>
<proteinExistence type="inferred from homology"/>
<protein>
    <recommendedName>
        <fullName evidence="1">Photosystem I assembly protein Ycf3</fullName>
    </recommendedName>
</protein>
<comment type="function">
    <text evidence="1">Essential for the assembly of the photosystem I (PSI) complex. May act as a chaperone-like factor to guide the assembly of the PSI subunits.</text>
</comment>
<comment type="subcellular location">
    <subcellularLocation>
        <location evidence="1">Plastid</location>
        <location evidence="1">Chloroplast thylakoid membrane</location>
        <topology evidence="1">Peripheral membrane protein</topology>
    </subcellularLocation>
</comment>
<comment type="similarity">
    <text evidence="1">Belongs to the Ycf3 family.</text>
</comment>
<sequence>MPRSRINGNFIDKTFSIVANILLRIIPTTSGEKEAFTYYRDGMSAQSEGNYAEALQNYYEAMRLEIDPYDRSYILYNIGLIHTSNGEHTKALEYYFRALERNPFLPQAFNNMAVICHYRGEQAIRQGDSEIAEAWFDQAAEYWKQAIALTPGNYIEAHNWLKITRRFE</sequence>
<evidence type="ECO:0000255" key="1">
    <source>
        <dbReference type="HAMAP-Rule" id="MF_00439"/>
    </source>
</evidence>